<name>DNLJ_STAAM</name>
<keyword id="KW-0227">DNA damage</keyword>
<keyword id="KW-0234">DNA repair</keyword>
<keyword id="KW-0235">DNA replication</keyword>
<keyword id="KW-0436">Ligase</keyword>
<keyword id="KW-0460">Magnesium</keyword>
<keyword id="KW-0464">Manganese</keyword>
<keyword id="KW-0479">Metal-binding</keyword>
<keyword id="KW-0520">NAD</keyword>
<keyword id="KW-0862">Zinc</keyword>
<comment type="function">
    <text evidence="1">DNA ligase that catalyzes the formation of phosphodiester linkages between 5'-phosphoryl and 3'-hydroxyl groups in double-stranded DNA using NAD as a coenzyme and as the energy source for the reaction. It is essential for DNA replication and repair of damaged DNA.</text>
</comment>
<comment type="catalytic activity">
    <reaction evidence="1">
        <text>NAD(+) + (deoxyribonucleotide)n-3'-hydroxyl + 5'-phospho-(deoxyribonucleotide)m = (deoxyribonucleotide)n+m + AMP + beta-nicotinamide D-nucleotide.</text>
        <dbReference type="EC" id="6.5.1.2"/>
    </reaction>
</comment>
<comment type="cofactor">
    <cofactor evidence="1">
        <name>Mg(2+)</name>
        <dbReference type="ChEBI" id="CHEBI:18420"/>
    </cofactor>
    <cofactor evidence="1">
        <name>Mn(2+)</name>
        <dbReference type="ChEBI" id="CHEBI:29035"/>
    </cofactor>
</comment>
<comment type="similarity">
    <text evidence="1">Belongs to the NAD-dependent DNA ligase family. LigA subfamily.</text>
</comment>
<gene>
    <name evidence="1" type="primary">ligA</name>
    <name type="synonym">lig</name>
    <name type="ordered locus">SAV1904</name>
</gene>
<accession>Q99SY3</accession>
<dbReference type="EC" id="6.5.1.2" evidence="1"/>
<dbReference type="EMBL" id="BA000017">
    <property type="protein sequence ID" value="BAB58066.1"/>
    <property type="molecule type" value="Genomic_DNA"/>
</dbReference>
<dbReference type="RefSeq" id="WP_000774556.1">
    <property type="nucleotide sequence ID" value="NC_002758.2"/>
</dbReference>
<dbReference type="SMR" id="Q99SY3"/>
<dbReference type="KEGG" id="sav:SAV1904"/>
<dbReference type="HOGENOM" id="CLU_007764_2_1_9"/>
<dbReference type="PhylomeDB" id="Q99SY3"/>
<dbReference type="Proteomes" id="UP000002481">
    <property type="component" value="Chromosome"/>
</dbReference>
<dbReference type="GO" id="GO:0005829">
    <property type="term" value="C:cytosol"/>
    <property type="evidence" value="ECO:0007669"/>
    <property type="project" value="TreeGrafter"/>
</dbReference>
<dbReference type="GO" id="GO:0003677">
    <property type="term" value="F:DNA binding"/>
    <property type="evidence" value="ECO:0007669"/>
    <property type="project" value="InterPro"/>
</dbReference>
<dbReference type="GO" id="GO:0003911">
    <property type="term" value="F:DNA ligase (NAD+) activity"/>
    <property type="evidence" value="ECO:0007669"/>
    <property type="project" value="UniProtKB-UniRule"/>
</dbReference>
<dbReference type="GO" id="GO:0046872">
    <property type="term" value="F:metal ion binding"/>
    <property type="evidence" value="ECO:0007669"/>
    <property type="project" value="UniProtKB-KW"/>
</dbReference>
<dbReference type="GO" id="GO:0006281">
    <property type="term" value="P:DNA repair"/>
    <property type="evidence" value="ECO:0007669"/>
    <property type="project" value="UniProtKB-KW"/>
</dbReference>
<dbReference type="GO" id="GO:0006260">
    <property type="term" value="P:DNA replication"/>
    <property type="evidence" value="ECO:0007669"/>
    <property type="project" value="UniProtKB-KW"/>
</dbReference>
<dbReference type="CDD" id="cd17748">
    <property type="entry name" value="BRCT_DNA_ligase_like"/>
    <property type="match status" value="1"/>
</dbReference>
<dbReference type="CDD" id="cd00114">
    <property type="entry name" value="LIGANc"/>
    <property type="match status" value="1"/>
</dbReference>
<dbReference type="FunFam" id="1.10.150.20:FF:000006">
    <property type="entry name" value="DNA ligase"/>
    <property type="match status" value="1"/>
</dbReference>
<dbReference type="FunFam" id="1.10.150.20:FF:000007">
    <property type="entry name" value="DNA ligase"/>
    <property type="match status" value="1"/>
</dbReference>
<dbReference type="FunFam" id="1.10.287.610:FF:000005">
    <property type="entry name" value="DNA ligase"/>
    <property type="match status" value="1"/>
</dbReference>
<dbReference type="FunFam" id="2.40.50.140:FF:000012">
    <property type="entry name" value="DNA ligase"/>
    <property type="match status" value="1"/>
</dbReference>
<dbReference type="FunFam" id="3.30.470.30:FF:000001">
    <property type="entry name" value="DNA ligase"/>
    <property type="match status" value="1"/>
</dbReference>
<dbReference type="FunFam" id="3.40.50.10190:FF:000045">
    <property type="entry name" value="DNA ligase"/>
    <property type="match status" value="1"/>
</dbReference>
<dbReference type="FunFam" id="6.20.10.30:FF:000002">
    <property type="entry name" value="DNA ligase"/>
    <property type="match status" value="1"/>
</dbReference>
<dbReference type="Gene3D" id="6.20.10.30">
    <property type="match status" value="1"/>
</dbReference>
<dbReference type="Gene3D" id="1.10.150.20">
    <property type="entry name" value="5' to 3' exonuclease, C-terminal subdomain"/>
    <property type="match status" value="2"/>
</dbReference>
<dbReference type="Gene3D" id="3.40.50.10190">
    <property type="entry name" value="BRCT domain"/>
    <property type="match status" value="1"/>
</dbReference>
<dbReference type="Gene3D" id="3.30.470.30">
    <property type="entry name" value="DNA ligase/mRNA capping enzyme"/>
    <property type="match status" value="1"/>
</dbReference>
<dbReference type="Gene3D" id="1.10.287.610">
    <property type="entry name" value="Helix hairpin bin"/>
    <property type="match status" value="1"/>
</dbReference>
<dbReference type="Gene3D" id="2.40.50.140">
    <property type="entry name" value="Nucleic acid-binding proteins"/>
    <property type="match status" value="1"/>
</dbReference>
<dbReference type="HAMAP" id="MF_01588">
    <property type="entry name" value="DNA_ligase_A"/>
    <property type="match status" value="1"/>
</dbReference>
<dbReference type="InterPro" id="IPR001357">
    <property type="entry name" value="BRCT_dom"/>
</dbReference>
<dbReference type="InterPro" id="IPR036420">
    <property type="entry name" value="BRCT_dom_sf"/>
</dbReference>
<dbReference type="InterPro" id="IPR041663">
    <property type="entry name" value="DisA/LigA_HHH"/>
</dbReference>
<dbReference type="InterPro" id="IPR001679">
    <property type="entry name" value="DNA_ligase"/>
</dbReference>
<dbReference type="InterPro" id="IPR018239">
    <property type="entry name" value="DNA_ligase_AS"/>
</dbReference>
<dbReference type="InterPro" id="IPR033136">
    <property type="entry name" value="DNA_ligase_CS"/>
</dbReference>
<dbReference type="InterPro" id="IPR013839">
    <property type="entry name" value="DNAligase_adenylation"/>
</dbReference>
<dbReference type="InterPro" id="IPR013840">
    <property type="entry name" value="DNAligase_N"/>
</dbReference>
<dbReference type="InterPro" id="IPR003583">
    <property type="entry name" value="Hlx-hairpin-Hlx_DNA-bd_motif"/>
</dbReference>
<dbReference type="InterPro" id="IPR012340">
    <property type="entry name" value="NA-bd_OB-fold"/>
</dbReference>
<dbReference type="InterPro" id="IPR004150">
    <property type="entry name" value="NAD_DNA_ligase_OB"/>
</dbReference>
<dbReference type="InterPro" id="IPR010994">
    <property type="entry name" value="RuvA_2-like"/>
</dbReference>
<dbReference type="InterPro" id="IPR004149">
    <property type="entry name" value="Znf_DNAligase_C4"/>
</dbReference>
<dbReference type="NCBIfam" id="TIGR00575">
    <property type="entry name" value="dnlj"/>
    <property type="match status" value="1"/>
</dbReference>
<dbReference type="NCBIfam" id="NF005932">
    <property type="entry name" value="PRK07956.1"/>
    <property type="match status" value="1"/>
</dbReference>
<dbReference type="PANTHER" id="PTHR23389">
    <property type="entry name" value="CHROMOSOME TRANSMISSION FIDELITY FACTOR 18"/>
    <property type="match status" value="1"/>
</dbReference>
<dbReference type="PANTHER" id="PTHR23389:SF9">
    <property type="entry name" value="DNA LIGASE"/>
    <property type="match status" value="1"/>
</dbReference>
<dbReference type="Pfam" id="PF00533">
    <property type="entry name" value="BRCT"/>
    <property type="match status" value="1"/>
</dbReference>
<dbReference type="Pfam" id="PF01653">
    <property type="entry name" value="DNA_ligase_aden"/>
    <property type="match status" value="1"/>
</dbReference>
<dbReference type="Pfam" id="PF03120">
    <property type="entry name" value="DNA_ligase_OB"/>
    <property type="match status" value="1"/>
</dbReference>
<dbReference type="Pfam" id="PF03119">
    <property type="entry name" value="DNA_ligase_ZBD"/>
    <property type="match status" value="1"/>
</dbReference>
<dbReference type="Pfam" id="PF12826">
    <property type="entry name" value="HHH_2"/>
    <property type="match status" value="1"/>
</dbReference>
<dbReference type="PIRSF" id="PIRSF001604">
    <property type="entry name" value="LigA"/>
    <property type="match status" value="1"/>
</dbReference>
<dbReference type="SMART" id="SM00292">
    <property type="entry name" value="BRCT"/>
    <property type="match status" value="1"/>
</dbReference>
<dbReference type="SMART" id="SM00278">
    <property type="entry name" value="HhH1"/>
    <property type="match status" value="3"/>
</dbReference>
<dbReference type="SMART" id="SM00532">
    <property type="entry name" value="LIGANc"/>
    <property type="match status" value="1"/>
</dbReference>
<dbReference type="SUPFAM" id="SSF52113">
    <property type="entry name" value="BRCT domain"/>
    <property type="match status" value="1"/>
</dbReference>
<dbReference type="SUPFAM" id="SSF56091">
    <property type="entry name" value="DNA ligase/mRNA capping enzyme, catalytic domain"/>
    <property type="match status" value="1"/>
</dbReference>
<dbReference type="SUPFAM" id="SSF50249">
    <property type="entry name" value="Nucleic acid-binding proteins"/>
    <property type="match status" value="1"/>
</dbReference>
<dbReference type="SUPFAM" id="SSF47781">
    <property type="entry name" value="RuvA domain 2-like"/>
    <property type="match status" value="1"/>
</dbReference>
<dbReference type="PROSITE" id="PS50172">
    <property type="entry name" value="BRCT"/>
    <property type="match status" value="1"/>
</dbReference>
<dbReference type="PROSITE" id="PS01055">
    <property type="entry name" value="DNA_LIGASE_N1"/>
    <property type="match status" value="1"/>
</dbReference>
<dbReference type="PROSITE" id="PS01056">
    <property type="entry name" value="DNA_LIGASE_N2"/>
    <property type="match status" value="1"/>
</dbReference>
<feature type="chain" id="PRO_0000161757" description="DNA ligase">
    <location>
        <begin position="1"/>
        <end position="667"/>
    </location>
</feature>
<feature type="domain" description="BRCT" evidence="1">
    <location>
        <begin position="586"/>
        <end position="667"/>
    </location>
</feature>
<feature type="active site" description="N6-AMP-lysine intermediate" evidence="1">
    <location>
        <position position="112"/>
    </location>
</feature>
<feature type="binding site" evidence="1">
    <location>
        <begin position="32"/>
        <end position="36"/>
    </location>
    <ligand>
        <name>NAD(+)</name>
        <dbReference type="ChEBI" id="CHEBI:57540"/>
    </ligand>
</feature>
<feature type="binding site" evidence="1">
    <location>
        <begin position="81"/>
        <end position="82"/>
    </location>
    <ligand>
        <name>NAD(+)</name>
        <dbReference type="ChEBI" id="CHEBI:57540"/>
    </ligand>
</feature>
<feature type="binding site" evidence="1">
    <location>
        <position position="110"/>
    </location>
    <ligand>
        <name>NAD(+)</name>
        <dbReference type="ChEBI" id="CHEBI:57540"/>
    </ligand>
</feature>
<feature type="binding site" evidence="1">
    <location>
        <position position="133"/>
    </location>
    <ligand>
        <name>NAD(+)</name>
        <dbReference type="ChEBI" id="CHEBI:57540"/>
    </ligand>
</feature>
<feature type="binding site" evidence="1">
    <location>
        <position position="167"/>
    </location>
    <ligand>
        <name>NAD(+)</name>
        <dbReference type="ChEBI" id="CHEBI:57540"/>
    </ligand>
</feature>
<feature type="binding site" evidence="1">
    <location>
        <position position="283"/>
    </location>
    <ligand>
        <name>NAD(+)</name>
        <dbReference type="ChEBI" id="CHEBI:57540"/>
    </ligand>
</feature>
<feature type="binding site" evidence="1">
    <location>
        <position position="307"/>
    </location>
    <ligand>
        <name>NAD(+)</name>
        <dbReference type="ChEBI" id="CHEBI:57540"/>
    </ligand>
</feature>
<feature type="binding site" evidence="1">
    <location>
        <position position="401"/>
    </location>
    <ligand>
        <name>Zn(2+)</name>
        <dbReference type="ChEBI" id="CHEBI:29105"/>
    </ligand>
</feature>
<feature type="binding site" evidence="1">
    <location>
        <position position="404"/>
    </location>
    <ligand>
        <name>Zn(2+)</name>
        <dbReference type="ChEBI" id="CHEBI:29105"/>
    </ligand>
</feature>
<feature type="binding site" evidence="1">
    <location>
        <position position="419"/>
    </location>
    <ligand>
        <name>Zn(2+)</name>
        <dbReference type="ChEBI" id="CHEBI:29105"/>
    </ligand>
</feature>
<feature type="binding site" evidence="1">
    <location>
        <position position="424"/>
    </location>
    <ligand>
        <name>Zn(2+)</name>
        <dbReference type="ChEBI" id="CHEBI:29105"/>
    </ligand>
</feature>
<proteinExistence type="inferred from homology"/>
<sequence length="667" mass="75095">MADLSSRVNELHDLLNQYSYEYYVEDNPSVPDSEYDKLLHELIKIEEEHPEYKTVDSPTVRVGGEAQASFKKVNHDTPMLSLGNAFNEDDLRKFDQRIREQIGNVEYMCELKIDGLAVSLKYVDGYFVQGLTRGDGTTGEDITENLKTIHAIPLKMKEPLNVEVRGEAYMPRRSFLRLNEEKEKNDEQLFANPRNAAAGSLRQLDSKLTAKRKLSVFIYSVNDFTDFNARSQSEALDELDKLGFTTNKNRARVNNIDGVLEYIEKWTSQRESLPYDIDGIVIKVNDLDQQDEMGFTQKSPRWAIAYKFPAEEVVTKLLDIELSIGRTGVVTPTAILEPVKVAGTTVSRASLHNEDLIHDRDIRIGDSVVVKKAGDIIPEVVRSIPERRPEDAVTYHMPTHCPSCGHELVRIEGEVALRCINPKCQAQLVEGLIHFVSRQAMNIDGLGTKIIQQLYQSELIKDVADIFYLTEEDLLPLDRMGQKKVDNLLAAIQQAKDNSLENLLFGLGIRHLGVKASQVLAEKYETIDRLLTVTEAELVEIHDIGDKVAQSVVTYLENEDIRALIQKLKDKHVNMIYKGIKTSDIEGHPEFSGKTIVLTGKLHQMTRNEASKWLASQGAKVTSSVTKNTDVVIAGEDAGSKLTKAQSLGIEIWTEQQFVDKQNELNS</sequence>
<evidence type="ECO:0000255" key="1">
    <source>
        <dbReference type="HAMAP-Rule" id="MF_01588"/>
    </source>
</evidence>
<organism>
    <name type="scientific">Staphylococcus aureus (strain Mu50 / ATCC 700699)</name>
    <dbReference type="NCBI Taxonomy" id="158878"/>
    <lineage>
        <taxon>Bacteria</taxon>
        <taxon>Bacillati</taxon>
        <taxon>Bacillota</taxon>
        <taxon>Bacilli</taxon>
        <taxon>Bacillales</taxon>
        <taxon>Staphylococcaceae</taxon>
        <taxon>Staphylococcus</taxon>
    </lineage>
</organism>
<protein>
    <recommendedName>
        <fullName evidence="1">DNA ligase</fullName>
        <ecNumber evidence="1">6.5.1.2</ecNumber>
    </recommendedName>
    <alternativeName>
        <fullName evidence="1">Polydeoxyribonucleotide synthase [NAD(+)]</fullName>
    </alternativeName>
</protein>
<reference key="1">
    <citation type="journal article" date="2001" name="Lancet">
        <title>Whole genome sequencing of meticillin-resistant Staphylococcus aureus.</title>
        <authorList>
            <person name="Kuroda M."/>
            <person name="Ohta T."/>
            <person name="Uchiyama I."/>
            <person name="Baba T."/>
            <person name="Yuzawa H."/>
            <person name="Kobayashi I."/>
            <person name="Cui L."/>
            <person name="Oguchi A."/>
            <person name="Aoki K."/>
            <person name="Nagai Y."/>
            <person name="Lian J.-Q."/>
            <person name="Ito T."/>
            <person name="Kanamori M."/>
            <person name="Matsumaru H."/>
            <person name="Maruyama A."/>
            <person name="Murakami H."/>
            <person name="Hosoyama A."/>
            <person name="Mizutani-Ui Y."/>
            <person name="Takahashi N.K."/>
            <person name="Sawano T."/>
            <person name="Inoue R."/>
            <person name="Kaito C."/>
            <person name="Sekimizu K."/>
            <person name="Hirakawa H."/>
            <person name="Kuhara S."/>
            <person name="Goto S."/>
            <person name="Yabuzaki J."/>
            <person name="Kanehisa M."/>
            <person name="Yamashita A."/>
            <person name="Oshima K."/>
            <person name="Furuya K."/>
            <person name="Yoshino C."/>
            <person name="Shiba T."/>
            <person name="Hattori M."/>
            <person name="Ogasawara N."/>
            <person name="Hayashi H."/>
            <person name="Hiramatsu K."/>
        </authorList>
    </citation>
    <scope>NUCLEOTIDE SEQUENCE [LARGE SCALE GENOMIC DNA]</scope>
    <source>
        <strain>Mu50 / ATCC 700699</strain>
    </source>
</reference>